<gene>
    <name type="primary">DAD1</name>
    <name type="ordered locus">YALI0B13684g</name>
</gene>
<sequence length="88" mass="10306">MSRVSMFPTEDKRSYFERQRDQYIKNISASMEDVLNNLNALNRSLEHTVGLSQKSEELAEMWSHFYNTVNEDLVKTEDGDIEVDTTKE</sequence>
<feature type="chain" id="PRO_0000127612" description="DASH complex subunit DAD1">
    <location>
        <begin position="1"/>
        <end position="88"/>
    </location>
</feature>
<name>DAD1_YARLI</name>
<evidence type="ECO:0000250" key="1">
    <source>
        <dbReference type="UniProtKB" id="P87297"/>
    </source>
</evidence>
<evidence type="ECO:0000250" key="2">
    <source>
        <dbReference type="UniProtKB" id="Q12248"/>
    </source>
</evidence>
<evidence type="ECO:0000305" key="3"/>
<proteinExistence type="inferred from homology"/>
<dbReference type="EMBL" id="CR382128">
    <property type="protein sequence ID" value="CAG83100.1"/>
    <property type="molecule type" value="Genomic_DNA"/>
</dbReference>
<dbReference type="RefSeq" id="XP_500849.1">
    <property type="nucleotide sequence ID" value="XM_500849.1"/>
</dbReference>
<dbReference type="SMR" id="Q6CER3"/>
<dbReference type="FunCoup" id="Q6CER3">
    <property type="interactions" value="15"/>
</dbReference>
<dbReference type="STRING" id="284591.Q6CER3"/>
<dbReference type="EnsemblFungi" id="CAG83100">
    <property type="protein sequence ID" value="CAG83100"/>
    <property type="gene ID" value="YALI0_B13684g"/>
</dbReference>
<dbReference type="KEGG" id="yli:2907311"/>
<dbReference type="VEuPathDB" id="FungiDB:YALI0_B13684g"/>
<dbReference type="HOGENOM" id="CLU_142427_2_1_1"/>
<dbReference type="InParanoid" id="Q6CER3"/>
<dbReference type="OMA" id="YIKNISA"/>
<dbReference type="OrthoDB" id="22262at4891"/>
<dbReference type="Proteomes" id="UP000001300">
    <property type="component" value="Chromosome B"/>
</dbReference>
<dbReference type="GO" id="GO:0005737">
    <property type="term" value="C:cytoplasm"/>
    <property type="evidence" value="ECO:0007669"/>
    <property type="project" value="UniProtKB-KW"/>
</dbReference>
<dbReference type="GO" id="GO:0042729">
    <property type="term" value="C:DASH complex"/>
    <property type="evidence" value="ECO:0000250"/>
    <property type="project" value="UniProtKB"/>
</dbReference>
<dbReference type="GO" id="GO:0072686">
    <property type="term" value="C:mitotic spindle"/>
    <property type="evidence" value="ECO:0007669"/>
    <property type="project" value="InterPro"/>
</dbReference>
<dbReference type="GO" id="GO:0044732">
    <property type="term" value="C:mitotic spindle pole body"/>
    <property type="evidence" value="ECO:0000318"/>
    <property type="project" value="GO_Central"/>
</dbReference>
<dbReference type="GO" id="GO:0005876">
    <property type="term" value="C:spindle microtubule"/>
    <property type="evidence" value="ECO:0000318"/>
    <property type="project" value="GO_Central"/>
</dbReference>
<dbReference type="GO" id="GO:0008608">
    <property type="term" value="P:attachment of spindle microtubules to kinetochore"/>
    <property type="evidence" value="ECO:0000250"/>
    <property type="project" value="UniProtKB"/>
</dbReference>
<dbReference type="GO" id="GO:0051301">
    <property type="term" value="P:cell division"/>
    <property type="evidence" value="ECO:0007669"/>
    <property type="project" value="UniProtKB-KW"/>
</dbReference>
<dbReference type="GO" id="GO:1990758">
    <property type="term" value="P:mitotic sister chromatid biorientation"/>
    <property type="evidence" value="ECO:0000250"/>
    <property type="project" value="UniProtKB"/>
</dbReference>
<dbReference type="GO" id="GO:1990976">
    <property type="term" value="P:protein transport along microtubule to mitotic spindle pole body"/>
    <property type="evidence" value="ECO:0000250"/>
    <property type="project" value="UniProtKB"/>
</dbReference>
<dbReference type="InterPro" id="IPR013958">
    <property type="entry name" value="DASH_Dad1"/>
</dbReference>
<dbReference type="PANTHER" id="PTHR28025">
    <property type="entry name" value="DASH COMPLEX SUBUNIT DAD1"/>
    <property type="match status" value="1"/>
</dbReference>
<dbReference type="PANTHER" id="PTHR28025:SF1">
    <property type="entry name" value="DASH COMPLEX SUBUNIT DAD1"/>
    <property type="match status" value="1"/>
</dbReference>
<dbReference type="Pfam" id="PF08649">
    <property type="entry name" value="DASH_Dad1"/>
    <property type="match status" value="1"/>
</dbReference>
<organism>
    <name type="scientific">Yarrowia lipolytica (strain CLIB 122 / E 150)</name>
    <name type="common">Yeast</name>
    <name type="synonym">Candida lipolytica</name>
    <dbReference type="NCBI Taxonomy" id="284591"/>
    <lineage>
        <taxon>Eukaryota</taxon>
        <taxon>Fungi</taxon>
        <taxon>Dikarya</taxon>
        <taxon>Ascomycota</taxon>
        <taxon>Saccharomycotina</taxon>
        <taxon>Dipodascomycetes</taxon>
        <taxon>Dipodascales</taxon>
        <taxon>Dipodascales incertae sedis</taxon>
        <taxon>Yarrowia</taxon>
    </lineage>
</organism>
<keyword id="KW-0131">Cell cycle</keyword>
<keyword id="KW-0132">Cell division</keyword>
<keyword id="KW-0137">Centromere</keyword>
<keyword id="KW-0158">Chromosome</keyword>
<keyword id="KW-0159">Chromosome partition</keyword>
<keyword id="KW-0963">Cytoplasm</keyword>
<keyword id="KW-0206">Cytoskeleton</keyword>
<keyword id="KW-0995">Kinetochore</keyword>
<keyword id="KW-0493">Microtubule</keyword>
<keyword id="KW-0498">Mitosis</keyword>
<keyword id="KW-0539">Nucleus</keyword>
<keyword id="KW-1185">Reference proteome</keyword>
<accession>Q6CER3</accession>
<reference key="1">
    <citation type="journal article" date="2004" name="Nature">
        <title>Genome evolution in yeasts.</title>
        <authorList>
            <person name="Dujon B."/>
            <person name="Sherman D."/>
            <person name="Fischer G."/>
            <person name="Durrens P."/>
            <person name="Casaregola S."/>
            <person name="Lafontaine I."/>
            <person name="de Montigny J."/>
            <person name="Marck C."/>
            <person name="Neuveglise C."/>
            <person name="Talla E."/>
            <person name="Goffard N."/>
            <person name="Frangeul L."/>
            <person name="Aigle M."/>
            <person name="Anthouard V."/>
            <person name="Babour A."/>
            <person name="Barbe V."/>
            <person name="Barnay S."/>
            <person name="Blanchin S."/>
            <person name="Beckerich J.-M."/>
            <person name="Beyne E."/>
            <person name="Bleykasten C."/>
            <person name="Boisrame A."/>
            <person name="Boyer J."/>
            <person name="Cattolico L."/>
            <person name="Confanioleri F."/>
            <person name="de Daruvar A."/>
            <person name="Despons L."/>
            <person name="Fabre E."/>
            <person name="Fairhead C."/>
            <person name="Ferry-Dumazet H."/>
            <person name="Groppi A."/>
            <person name="Hantraye F."/>
            <person name="Hennequin C."/>
            <person name="Jauniaux N."/>
            <person name="Joyet P."/>
            <person name="Kachouri R."/>
            <person name="Kerrest A."/>
            <person name="Koszul R."/>
            <person name="Lemaire M."/>
            <person name="Lesur I."/>
            <person name="Ma L."/>
            <person name="Muller H."/>
            <person name="Nicaud J.-M."/>
            <person name="Nikolski M."/>
            <person name="Oztas S."/>
            <person name="Ozier-Kalogeropoulos O."/>
            <person name="Pellenz S."/>
            <person name="Potier S."/>
            <person name="Richard G.-F."/>
            <person name="Straub M.-L."/>
            <person name="Suleau A."/>
            <person name="Swennen D."/>
            <person name="Tekaia F."/>
            <person name="Wesolowski-Louvel M."/>
            <person name="Westhof E."/>
            <person name="Wirth B."/>
            <person name="Zeniou-Meyer M."/>
            <person name="Zivanovic Y."/>
            <person name="Bolotin-Fukuhara M."/>
            <person name="Thierry A."/>
            <person name="Bouchier C."/>
            <person name="Caudron B."/>
            <person name="Scarpelli C."/>
            <person name="Gaillardin C."/>
            <person name="Weissenbach J."/>
            <person name="Wincker P."/>
            <person name="Souciet J.-L."/>
        </authorList>
    </citation>
    <scope>NUCLEOTIDE SEQUENCE [LARGE SCALE GENOMIC DNA]</scope>
    <source>
        <strain>CLIB 122 / E 150</strain>
    </source>
</reference>
<protein>
    <recommendedName>
        <fullName>DASH complex subunit DAD1</fullName>
    </recommendedName>
    <alternativeName>
        <fullName>Outer kinetochore protein DAD1</fullName>
    </alternativeName>
</protein>
<comment type="function">
    <text evidence="2">Component of the DASH complex that connects microtubules with kinetochores and couples microtubule depolymerisation to chromosome movement; it is involved in retrieving kinetochores to the spindle poles before their re-orientation on the spindle in early mitosis and allows microtubule depolymerization to pull chromosomes apart and resist detachment during anaphase. Kinetochores, consisting of a centromere-associated inner segment and a microtubule-contacting outer segment, play a crucial role in chromosome segregation by mediating the physical connection between centromeric DNA and microtubules. Kinetochores also serve as an input point for the spindle assembly checkpoint, which delays anaphase until all chromosomes have bioriented on the mitotic spindle.</text>
</comment>
<comment type="subunit">
    <text evidence="1 2">Component of the DASH complex consisting of ASK1, DAD1, DAD2, DAD3, DAD4, DAM1, DUO1, HSK3, SPC19 and SPC34, with a stoichiometry of one copy of each subunit per complex. Multiple DASH complexes oligomerize to form a ring that encircles spindle microtubules and organizes the rod-like NDC80 complexes of the outer kinetochore. DASH complex oligomerization strengthens microtubule attachments (By similarity). On cytoplasmic microtubules, DASH complexes appear to form patches instead of rings (By similarity).</text>
</comment>
<comment type="subcellular location">
    <subcellularLocation>
        <location evidence="2">Nucleus</location>
    </subcellularLocation>
    <subcellularLocation>
        <location evidence="2">Cytoplasm</location>
        <location evidence="2">Cytoskeleton</location>
        <location evidence="2">Spindle</location>
    </subcellularLocation>
    <subcellularLocation>
        <location evidence="2">Chromosome</location>
        <location evidence="2">Centromere</location>
        <location evidence="2">Kinetochore</location>
    </subcellularLocation>
</comment>
<comment type="similarity">
    <text evidence="3">Belongs to the DASH complex DAD1 family.</text>
</comment>